<sequence length="11" mass="1105">GSTGLIPFGRT</sequence>
<organism>
    <name type="scientific">Pilema dubia</name>
    <name type="common">Cockroach</name>
    <name type="synonym">Pilema reflexa</name>
    <dbReference type="NCBI Taxonomy" id="521525"/>
    <lineage>
        <taxon>Eukaryota</taxon>
        <taxon>Metazoa</taxon>
        <taxon>Ecdysozoa</taxon>
        <taxon>Arthropoda</taxon>
        <taxon>Hexapoda</taxon>
        <taxon>Insecta</taxon>
        <taxon>Pterygota</taxon>
        <taxon>Neoptera</taxon>
        <taxon>Polyneoptera</taxon>
        <taxon>Dictyoptera</taxon>
        <taxon>Blattodea</taxon>
        <taxon>Blaberoidea</taxon>
        <taxon>Blaberidae</taxon>
        <taxon>Perisphaerinae</taxon>
        <taxon>Pilema</taxon>
    </lineage>
</organism>
<comment type="function">
    <text evidence="4">Mediates visceral muscle contractile activity (myotropic activity).</text>
</comment>
<comment type="subcellular location">
    <subcellularLocation>
        <location evidence="4">Secreted</location>
    </subcellularLocation>
</comment>
<comment type="similarity">
    <text evidence="1">Belongs to the periviscerokinin family.</text>
</comment>
<dbReference type="GO" id="GO:0005576">
    <property type="term" value="C:extracellular region"/>
    <property type="evidence" value="ECO:0007669"/>
    <property type="project" value="UniProtKB-SubCell"/>
</dbReference>
<dbReference type="GO" id="GO:0007218">
    <property type="term" value="P:neuropeptide signaling pathway"/>
    <property type="evidence" value="ECO:0007669"/>
    <property type="project" value="UniProtKB-KW"/>
</dbReference>
<dbReference type="InterPro" id="IPR013231">
    <property type="entry name" value="Periviscerokinin"/>
</dbReference>
<dbReference type="Pfam" id="PF08259">
    <property type="entry name" value="Periviscerokin"/>
    <property type="match status" value="1"/>
</dbReference>
<keyword id="KW-0027">Amidation</keyword>
<keyword id="KW-0903">Direct protein sequencing</keyword>
<keyword id="KW-0527">Neuropeptide</keyword>
<keyword id="KW-0964">Secreted</keyword>
<reference evidence="4" key="1">
    <citation type="journal article" date="2009" name="BMC Evol. Biol.">
        <title>A proteomic approach for studying insect phylogeny: CAPA peptides of ancient insect taxa (Dictyoptera, Blattoptera) as a test case.</title>
        <authorList>
            <person name="Roth S."/>
            <person name="Fromm B."/>
            <person name="Gaede G."/>
            <person name="Predel R."/>
        </authorList>
    </citation>
    <scope>PROTEIN SEQUENCE</scope>
    <scope>AMIDATION AT THR-11</scope>
    <source>
        <tissue evidence="2">Abdominal perisympathetic organs</tissue>
    </source>
</reference>
<accession>P85734</accession>
<feature type="peptide" id="PRO_0000378763" description="Periviscerokinin-1" evidence="2">
    <location>
        <begin position="1"/>
        <end position="11"/>
    </location>
</feature>
<feature type="modified residue" description="Threonine amide" evidence="2">
    <location>
        <position position="11"/>
    </location>
</feature>
<evidence type="ECO:0000255" key="1"/>
<evidence type="ECO:0000269" key="2">
    <source>
    </source>
</evidence>
<evidence type="ECO:0000303" key="3">
    <source>
    </source>
</evidence>
<evidence type="ECO:0000305" key="4"/>
<name>PVK1_PILDU</name>
<proteinExistence type="evidence at protein level"/>
<protein>
    <recommendedName>
        <fullName evidence="3">Periviscerokinin-1</fullName>
        <shortName evidence="3">PilDu-PVK-1</shortName>
    </recommendedName>
</protein>